<accession>P0DRG8</accession>
<name>CRY23_TITOB</name>
<dbReference type="GO" id="GO:0005576">
    <property type="term" value="C:extracellular region"/>
    <property type="evidence" value="ECO:0007669"/>
    <property type="project" value="UniProtKB-SubCell"/>
</dbReference>
<sequence length="7" mass="734">PCFTLPG</sequence>
<proteinExistence type="evidence at protein level"/>
<protein>
    <recommendedName>
        <fullName evidence="2">Cryptide Pep-23</fullName>
    </recommendedName>
</protein>
<feature type="peptide" id="PRO_0000461758" description="Cryptide Pep-23" evidence="1">
    <location>
        <begin position="1"/>
        <end position="7"/>
    </location>
</feature>
<keyword id="KW-0903">Direct protein sequencing</keyword>
<keyword id="KW-0964">Secreted</keyword>
<comment type="subcellular location">
    <subcellularLocation>
        <location evidence="1">Secreted</location>
    </subcellularLocation>
</comment>
<comment type="tissue specificity">
    <text evidence="3">Expressed by the venom gland.</text>
</comment>
<comment type="mass spectrometry" mass="733.38" method="Electrospray" evidence="1"/>
<organism>
    <name type="scientific">Tityus obscurus</name>
    <name type="common">Amazonian scorpion</name>
    <name type="synonym">Tityus cambridgei</name>
    <dbReference type="NCBI Taxonomy" id="1221240"/>
    <lineage>
        <taxon>Eukaryota</taxon>
        <taxon>Metazoa</taxon>
        <taxon>Ecdysozoa</taxon>
        <taxon>Arthropoda</taxon>
        <taxon>Chelicerata</taxon>
        <taxon>Arachnida</taxon>
        <taxon>Scorpiones</taxon>
        <taxon>Buthida</taxon>
        <taxon>Buthoidea</taxon>
        <taxon>Buthidae</taxon>
        <taxon>Tityus</taxon>
    </lineage>
</organism>
<reference key="1">
    <citation type="journal article" date="2018" name="J. Proteomics">
        <title>Profiling the short, linear, non-disulfide bond-containing peptidome from the venom of the scorpion Tityus obscurus.</title>
        <authorList>
            <person name="Dias N.B."/>
            <person name="de Souza B.M."/>
            <person name="Cocchi F.K."/>
            <person name="Chalkidis H.M."/>
            <person name="Dorce V.A.C."/>
            <person name="Palma M.S."/>
        </authorList>
    </citation>
    <scope>PROTEIN SEQUENCE</scope>
    <scope>IDENTIFICATION BY MASS SPECTROMETRY</scope>
    <scope>MASS SPECTROMETRY</scope>
    <scope>SUBCELLULAR LOCATION</scope>
    <source>
        <tissue>Venom</tissue>
    </source>
</reference>
<evidence type="ECO:0000269" key="1">
    <source>
    </source>
</evidence>
<evidence type="ECO:0000303" key="2">
    <source>
    </source>
</evidence>
<evidence type="ECO:0000305" key="3">
    <source>
    </source>
</evidence>